<protein>
    <recommendedName>
        <fullName>Superoxide dismutase [Cu-Zn]</fullName>
        <ecNumber>1.15.1.1</ecNumber>
    </recommendedName>
</protein>
<organism>
    <name type="scientific">Pasteurella multocida (strain Pm70)</name>
    <dbReference type="NCBI Taxonomy" id="272843"/>
    <lineage>
        <taxon>Bacteria</taxon>
        <taxon>Pseudomonadati</taxon>
        <taxon>Pseudomonadota</taxon>
        <taxon>Gammaproteobacteria</taxon>
        <taxon>Pasteurellales</taxon>
        <taxon>Pasteurellaceae</taxon>
        <taxon>Pasteurella</taxon>
    </lineage>
</organism>
<accession>Q59689</accession>
<keyword id="KW-0049">Antioxidant</keyword>
<keyword id="KW-0186">Copper</keyword>
<keyword id="KW-1015">Disulfide bond</keyword>
<keyword id="KW-0479">Metal-binding</keyword>
<keyword id="KW-0560">Oxidoreductase</keyword>
<keyword id="KW-0574">Periplasm</keyword>
<keyword id="KW-1185">Reference proteome</keyword>
<keyword id="KW-0732">Signal</keyword>
<keyword id="KW-0862">Zinc</keyword>
<name>SODC_PASMU</name>
<dbReference type="EC" id="1.15.1.1"/>
<dbReference type="EMBL" id="AE004439">
    <property type="protein sequence ID" value="AAK04036.1"/>
    <property type="molecule type" value="Genomic_DNA"/>
</dbReference>
<dbReference type="EMBL" id="X83124">
    <property type="protein sequence ID" value="CAA58205.1"/>
    <property type="molecule type" value="Genomic_DNA"/>
</dbReference>
<dbReference type="RefSeq" id="WP_010907421.1">
    <property type="nucleotide sequence ID" value="NC_002663.1"/>
</dbReference>
<dbReference type="SMR" id="Q59689"/>
<dbReference type="STRING" id="272843.PM1952"/>
<dbReference type="EnsemblBacteria" id="AAK04036">
    <property type="protein sequence ID" value="AAK04036"/>
    <property type="gene ID" value="PM1952"/>
</dbReference>
<dbReference type="KEGG" id="pmu:PM1952"/>
<dbReference type="PATRIC" id="fig|272843.6.peg.1976"/>
<dbReference type="HOGENOM" id="CLU_056632_7_1_6"/>
<dbReference type="OrthoDB" id="5431326at2"/>
<dbReference type="Proteomes" id="UP000000809">
    <property type="component" value="Chromosome"/>
</dbReference>
<dbReference type="GO" id="GO:0042597">
    <property type="term" value="C:periplasmic space"/>
    <property type="evidence" value="ECO:0007669"/>
    <property type="project" value="UniProtKB-SubCell"/>
</dbReference>
<dbReference type="GO" id="GO:0005507">
    <property type="term" value="F:copper ion binding"/>
    <property type="evidence" value="ECO:0007669"/>
    <property type="project" value="InterPro"/>
</dbReference>
<dbReference type="GO" id="GO:0004784">
    <property type="term" value="F:superoxide dismutase activity"/>
    <property type="evidence" value="ECO:0007669"/>
    <property type="project" value="UniProtKB-EC"/>
</dbReference>
<dbReference type="CDD" id="cd00305">
    <property type="entry name" value="Cu-Zn_Superoxide_Dismutase"/>
    <property type="match status" value="1"/>
</dbReference>
<dbReference type="FunFam" id="2.60.40.200:FF:000002">
    <property type="entry name" value="Superoxide dismutase [Cu-Zn]"/>
    <property type="match status" value="1"/>
</dbReference>
<dbReference type="Gene3D" id="2.60.40.200">
    <property type="entry name" value="Superoxide dismutase, copper/zinc binding domain"/>
    <property type="match status" value="1"/>
</dbReference>
<dbReference type="InterPro" id="IPR036423">
    <property type="entry name" value="SOD-like_Cu/Zn_dom_sf"/>
</dbReference>
<dbReference type="InterPro" id="IPR024134">
    <property type="entry name" value="SOD_Cu/Zn_/chaperone"/>
</dbReference>
<dbReference type="InterPro" id="IPR018152">
    <property type="entry name" value="SOD_Cu/Zn_BS"/>
</dbReference>
<dbReference type="InterPro" id="IPR001424">
    <property type="entry name" value="SOD_Cu_Zn_dom"/>
</dbReference>
<dbReference type="NCBIfam" id="NF007628">
    <property type="entry name" value="PRK10290.1"/>
    <property type="match status" value="1"/>
</dbReference>
<dbReference type="PANTHER" id="PTHR10003">
    <property type="entry name" value="SUPEROXIDE DISMUTASE CU-ZN -RELATED"/>
    <property type="match status" value="1"/>
</dbReference>
<dbReference type="Pfam" id="PF00080">
    <property type="entry name" value="Sod_Cu"/>
    <property type="match status" value="1"/>
</dbReference>
<dbReference type="SUPFAM" id="SSF49329">
    <property type="entry name" value="Cu,Zn superoxide dismutase-like"/>
    <property type="match status" value="1"/>
</dbReference>
<dbReference type="PROSITE" id="PS00087">
    <property type="entry name" value="SOD_CU_ZN_1"/>
    <property type="match status" value="1"/>
</dbReference>
<dbReference type="PROSITE" id="PS00332">
    <property type="entry name" value="SOD_CU_ZN_2"/>
    <property type="match status" value="1"/>
</dbReference>
<feature type="signal peptide" evidence="2">
    <location>
        <begin position="1"/>
        <end position="20"/>
    </location>
</feature>
<feature type="chain" id="PRO_0000032835" description="Superoxide dismutase [Cu-Zn]">
    <location>
        <begin position="21"/>
        <end position="186"/>
    </location>
</feature>
<feature type="binding site" evidence="1">
    <location>
        <position position="79"/>
    </location>
    <ligand>
        <name>Cu cation</name>
        <dbReference type="ChEBI" id="CHEBI:23378"/>
        <note>catalytic</note>
    </ligand>
</feature>
<feature type="binding site" evidence="1">
    <location>
        <position position="81"/>
    </location>
    <ligand>
        <name>Cu cation</name>
        <dbReference type="ChEBI" id="CHEBI:23378"/>
        <note>catalytic</note>
    </ligand>
</feature>
<feature type="binding site" evidence="1">
    <location>
        <position position="104"/>
    </location>
    <ligand>
        <name>Cu cation</name>
        <dbReference type="ChEBI" id="CHEBI:23378"/>
        <note>catalytic</note>
    </ligand>
</feature>
<feature type="binding site" evidence="1">
    <location>
        <position position="104"/>
    </location>
    <ligand>
        <name>Zn(2+)</name>
        <dbReference type="ChEBI" id="CHEBI:29105"/>
        <note>structural</note>
    </ligand>
</feature>
<feature type="binding site" evidence="1">
    <location>
        <position position="113"/>
    </location>
    <ligand>
        <name>Zn(2+)</name>
        <dbReference type="ChEBI" id="CHEBI:29105"/>
        <note>structural</note>
    </ligand>
</feature>
<feature type="binding site" evidence="1">
    <location>
        <position position="122"/>
    </location>
    <ligand>
        <name>Zn(2+)</name>
        <dbReference type="ChEBI" id="CHEBI:29105"/>
        <note>structural</note>
    </ligand>
</feature>
<feature type="binding site" evidence="1">
    <location>
        <position position="125"/>
    </location>
    <ligand>
        <name>Zn(2+)</name>
        <dbReference type="ChEBI" id="CHEBI:29105"/>
        <note>structural</note>
    </ligand>
</feature>
<feature type="binding site" evidence="1">
    <location>
        <position position="160"/>
    </location>
    <ligand>
        <name>Cu cation</name>
        <dbReference type="ChEBI" id="CHEBI:23378"/>
        <note>catalytic</note>
    </ligand>
</feature>
<feature type="disulfide bond" evidence="1">
    <location>
        <begin position="86"/>
        <end position="182"/>
    </location>
</feature>
<feature type="sequence conflict" description="In Ref. 2; CAA58205." evidence="3" ref="2">
    <original>A</original>
    <variation>V</variation>
    <location>
        <position position="130"/>
    </location>
</feature>
<reference key="1">
    <citation type="journal article" date="2001" name="Proc. Natl. Acad. Sci. U.S.A.">
        <title>Complete genomic sequence of Pasteurella multocida Pm70.</title>
        <authorList>
            <person name="May B.J."/>
            <person name="Zhang Q."/>
            <person name="Li L.L."/>
            <person name="Paustian M.L."/>
            <person name="Whittam T.S."/>
            <person name="Kapur V."/>
        </authorList>
    </citation>
    <scope>NUCLEOTIDE SEQUENCE [LARGE SCALE GENOMIC DNA]</scope>
    <source>
        <strain>Pm70</strain>
    </source>
</reference>
<reference key="2">
    <citation type="journal article" date="1995" name="Microbiology">
        <title>Bacterial [Cu,Zn]-superoxide dismutase: phylogenetically distinct from the eukaryotic enzyme, and not so rare after all!</title>
        <authorList>
            <person name="Kroll J.S."/>
            <person name="Langford P.R."/>
            <person name="Wilks K.E."/>
            <person name="Keil A.D."/>
        </authorList>
    </citation>
    <scope>NUCLEOTIDE SEQUENCE [GENOMIC DNA] OF 87-173</scope>
    <source>
        <strain>T5</strain>
    </source>
</reference>
<proteinExistence type="inferred from homology"/>
<evidence type="ECO:0000250" key="1"/>
<evidence type="ECO:0000255" key="2"/>
<evidence type="ECO:0000305" key="3"/>
<sequence>MKKTVLALMFSCGMVASAFAHNHAVEHKHTGEMLEVKVELLDPAKGNQEIGKVVITESAYGLVFTPELKNLTAGLHGFHIHQNPSCDAKEKDGKLVAGLAAGGHWDPKNAGKHGYPWSDDAHLGDLPALAVNQDGTANNPVLAPRLKHLDDVKGRSLMIHEGGDNHDDHPAPLGGGGPRMACGVIK</sequence>
<comment type="function">
    <text evidence="1">Destroys radicals which are normally produced within the cells and which are toxic to biological systems.</text>
</comment>
<comment type="catalytic activity">
    <reaction>
        <text>2 superoxide + 2 H(+) = H2O2 + O2</text>
        <dbReference type="Rhea" id="RHEA:20696"/>
        <dbReference type="ChEBI" id="CHEBI:15378"/>
        <dbReference type="ChEBI" id="CHEBI:15379"/>
        <dbReference type="ChEBI" id="CHEBI:16240"/>
        <dbReference type="ChEBI" id="CHEBI:18421"/>
        <dbReference type="EC" id="1.15.1.1"/>
    </reaction>
</comment>
<comment type="cofactor">
    <cofactor evidence="1">
        <name>Cu cation</name>
        <dbReference type="ChEBI" id="CHEBI:23378"/>
    </cofactor>
    <text evidence="1">Binds 1 copper ion per subunit.</text>
</comment>
<comment type="cofactor">
    <cofactor evidence="1">
        <name>Zn(2+)</name>
        <dbReference type="ChEBI" id="CHEBI:29105"/>
    </cofactor>
    <text evidence="1">Binds 1 zinc ion per subunit.</text>
</comment>
<comment type="subunit">
    <text evidence="1">Homodimer.</text>
</comment>
<comment type="subcellular location">
    <subcellularLocation>
        <location evidence="1">Periplasm</location>
    </subcellularLocation>
</comment>
<comment type="similarity">
    <text evidence="3">Belongs to the Cu-Zn superoxide dismutase family.</text>
</comment>
<gene>
    <name type="primary">sodC</name>
    <name type="ordered locus">PM1952</name>
</gene>